<proteinExistence type="predicted"/>
<name>YCVB_SCHPO</name>
<evidence type="ECO:0000269" key="1">
    <source>
    </source>
</evidence>
<reference key="1">
    <citation type="journal article" date="2002" name="Nature">
        <title>The genome sequence of Schizosaccharomyces pombe.</title>
        <authorList>
            <person name="Wood V."/>
            <person name="Gwilliam R."/>
            <person name="Rajandream M.A."/>
            <person name="Lyne M.H."/>
            <person name="Lyne R."/>
            <person name="Stewart A."/>
            <person name="Sgouros J.G."/>
            <person name="Peat N."/>
            <person name="Hayles J."/>
            <person name="Baker S.G."/>
            <person name="Basham D."/>
            <person name="Bowman S."/>
            <person name="Brooks K."/>
            <person name="Brown D."/>
            <person name="Brown S."/>
            <person name="Chillingworth T."/>
            <person name="Churcher C.M."/>
            <person name="Collins M."/>
            <person name="Connor R."/>
            <person name="Cronin A."/>
            <person name="Davis P."/>
            <person name="Feltwell T."/>
            <person name="Fraser A."/>
            <person name="Gentles S."/>
            <person name="Goble A."/>
            <person name="Hamlin N."/>
            <person name="Harris D.E."/>
            <person name="Hidalgo J."/>
            <person name="Hodgson G."/>
            <person name="Holroyd S."/>
            <person name="Hornsby T."/>
            <person name="Howarth S."/>
            <person name="Huckle E.J."/>
            <person name="Hunt S."/>
            <person name="Jagels K."/>
            <person name="James K.D."/>
            <person name="Jones L."/>
            <person name="Jones M."/>
            <person name="Leather S."/>
            <person name="McDonald S."/>
            <person name="McLean J."/>
            <person name="Mooney P."/>
            <person name="Moule S."/>
            <person name="Mungall K.L."/>
            <person name="Murphy L.D."/>
            <person name="Niblett D."/>
            <person name="Odell C."/>
            <person name="Oliver K."/>
            <person name="O'Neil S."/>
            <person name="Pearson D."/>
            <person name="Quail M.A."/>
            <person name="Rabbinowitsch E."/>
            <person name="Rutherford K.M."/>
            <person name="Rutter S."/>
            <person name="Saunders D."/>
            <person name="Seeger K."/>
            <person name="Sharp S."/>
            <person name="Skelton J."/>
            <person name="Simmonds M.N."/>
            <person name="Squares R."/>
            <person name="Squares S."/>
            <person name="Stevens K."/>
            <person name="Taylor K."/>
            <person name="Taylor R.G."/>
            <person name="Tivey A."/>
            <person name="Walsh S.V."/>
            <person name="Warren T."/>
            <person name="Whitehead S."/>
            <person name="Woodward J.R."/>
            <person name="Volckaert G."/>
            <person name="Aert R."/>
            <person name="Robben J."/>
            <person name="Grymonprez B."/>
            <person name="Weltjens I."/>
            <person name="Vanstreels E."/>
            <person name="Rieger M."/>
            <person name="Schaefer M."/>
            <person name="Mueller-Auer S."/>
            <person name="Gabel C."/>
            <person name="Fuchs M."/>
            <person name="Duesterhoeft A."/>
            <person name="Fritzc C."/>
            <person name="Holzer E."/>
            <person name="Moestl D."/>
            <person name="Hilbert H."/>
            <person name="Borzym K."/>
            <person name="Langer I."/>
            <person name="Beck A."/>
            <person name="Lehrach H."/>
            <person name="Reinhardt R."/>
            <person name="Pohl T.M."/>
            <person name="Eger P."/>
            <person name="Zimmermann W."/>
            <person name="Wedler H."/>
            <person name="Wambutt R."/>
            <person name="Purnelle B."/>
            <person name="Goffeau A."/>
            <person name="Cadieu E."/>
            <person name="Dreano S."/>
            <person name="Gloux S."/>
            <person name="Lelaure V."/>
            <person name="Mottier S."/>
            <person name="Galibert F."/>
            <person name="Aves S.J."/>
            <person name="Xiang Z."/>
            <person name="Hunt C."/>
            <person name="Moore K."/>
            <person name="Hurst S.M."/>
            <person name="Lucas M."/>
            <person name="Rochet M."/>
            <person name="Gaillardin C."/>
            <person name="Tallada V.A."/>
            <person name="Garzon A."/>
            <person name="Thode G."/>
            <person name="Daga R.R."/>
            <person name="Cruzado L."/>
            <person name="Jimenez J."/>
            <person name="Sanchez M."/>
            <person name="del Rey F."/>
            <person name="Benito J."/>
            <person name="Dominguez A."/>
            <person name="Revuelta J.L."/>
            <person name="Moreno S."/>
            <person name="Armstrong J."/>
            <person name="Forsburg S.L."/>
            <person name="Cerutti L."/>
            <person name="Lowe T."/>
            <person name="McCombie W.R."/>
            <person name="Paulsen I."/>
            <person name="Potashkin J."/>
            <person name="Shpakovski G.V."/>
            <person name="Ussery D."/>
            <person name="Barrell B.G."/>
            <person name="Nurse P."/>
        </authorList>
    </citation>
    <scope>NUCLEOTIDE SEQUENCE [LARGE SCALE GENOMIC DNA]</scope>
    <source>
        <strain>972 / ATCC 24843</strain>
    </source>
</reference>
<reference key="2">
    <citation type="journal article" date="2006" name="Nat. Biotechnol.">
        <title>ORFeome cloning and global analysis of protein localization in the fission yeast Schizosaccharomyces pombe.</title>
        <authorList>
            <person name="Matsuyama A."/>
            <person name="Arai R."/>
            <person name="Yashiroda Y."/>
            <person name="Shirai A."/>
            <person name="Kamata A."/>
            <person name="Sekido S."/>
            <person name="Kobayashi Y."/>
            <person name="Hashimoto A."/>
            <person name="Hamamoto M."/>
            <person name="Hiraoka Y."/>
            <person name="Horinouchi S."/>
            <person name="Yoshida M."/>
        </authorList>
    </citation>
    <scope>SUBCELLULAR LOCATION [LARGE SCALE ANALYSIS]</scope>
</reference>
<comment type="subcellular location">
    <subcellularLocation>
        <location evidence="1">Mitochondrion</location>
    </subcellularLocation>
</comment>
<sequence length="128" mass="14656">MPFLKPSKVSLKRILQGNPPKPIGLTEYGHLLRLVGLREADSKEENERTILKLNEGIIQMHAIERLDTSFIKEPFRTLNHAINAESLPSLPDQEPWNVFQNAKKRDGQYFAVYSKLKDDSSNESPNKQ</sequence>
<keyword id="KW-0496">Mitochondrion</keyword>
<keyword id="KW-1185">Reference proteome</keyword>
<protein>
    <recommendedName>
        <fullName>Uncharacterized protein C777.11</fullName>
    </recommendedName>
</protein>
<feature type="chain" id="PRO_0000303996" description="Uncharacterized protein C777.11">
    <location>
        <begin position="1"/>
        <end position="128"/>
    </location>
</feature>
<gene>
    <name type="ORF">SPCC777.11</name>
</gene>
<accession>O74550</accession>
<organism>
    <name type="scientific">Schizosaccharomyces pombe (strain 972 / ATCC 24843)</name>
    <name type="common">Fission yeast</name>
    <dbReference type="NCBI Taxonomy" id="284812"/>
    <lineage>
        <taxon>Eukaryota</taxon>
        <taxon>Fungi</taxon>
        <taxon>Dikarya</taxon>
        <taxon>Ascomycota</taxon>
        <taxon>Taphrinomycotina</taxon>
        <taxon>Schizosaccharomycetes</taxon>
        <taxon>Schizosaccharomycetales</taxon>
        <taxon>Schizosaccharomycetaceae</taxon>
        <taxon>Schizosaccharomyces</taxon>
    </lineage>
</organism>
<dbReference type="EMBL" id="CU329672">
    <property type="protein sequence ID" value="CAA20715.1"/>
    <property type="molecule type" value="Genomic_DNA"/>
</dbReference>
<dbReference type="PIR" id="T11717">
    <property type="entry name" value="T11717"/>
</dbReference>
<dbReference type="STRING" id="284812.O74550"/>
<dbReference type="PaxDb" id="4896-SPCC777.11.1"/>
<dbReference type="EnsemblFungi" id="SPCC777.11.1">
    <property type="protein sequence ID" value="SPCC777.11.1:pep"/>
    <property type="gene ID" value="SPCC777.11"/>
</dbReference>
<dbReference type="KEGG" id="spo:2539590"/>
<dbReference type="PomBase" id="SPCC777.11"/>
<dbReference type="VEuPathDB" id="FungiDB:SPCC777.11"/>
<dbReference type="HOGENOM" id="CLU_1950068_0_0_1"/>
<dbReference type="InParanoid" id="O74550"/>
<dbReference type="OMA" id="GRMHAME"/>
<dbReference type="PRO" id="PR:O74550"/>
<dbReference type="Proteomes" id="UP000002485">
    <property type="component" value="Chromosome III"/>
</dbReference>
<dbReference type="GO" id="GO:0030956">
    <property type="term" value="C:glutamyl-tRNA(Gln) amidotransferase complex"/>
    <property type="evidence" value="ECO:0000266"/>
    <property type="project" value="PomBase"/>
</dbReference>
<dbReference type="GO" id="GO:0005759">
    <property type="term" value="C:mitochondrial matrix"/>
    <property type="evidence" value="ECO:0000305"/>
    <property type="project" value="PomBase"/>
</dbReference>
<dbReference type="GO" id="GO:0005739">
    <property type="term" value="C:mitochondrion"/>
    <property type="evidence" value="ECO:0007005"/>
    <property type="project" value="PomBase"/>
</dbReference>
<dbReference type="GO" id="GO:0070681">
    <property type="term" value="P:glutaminyl-tRNAGln biosynthesis via transamidation"/>
    <property type="evidence" value="ECO:0000266"/>
    <property type="project" value="PomBase"/>
</dbReference>
<dbReference type="GO" id="GO:0032543">
    <property type="term" value="P:mitochondrial translation"/>
    <property type="evidence" value="ECO:0000305"/>
    <property type="project" value="PomBase"/>
</dbReference>
<dbReference type="InterPro" id="IPR049545">
    <property type="entry name" value="Gta3_dom"/>
</dbReference>
<dbReference type="Pfam" id="PF20978">
    <property type="entry name" value="Gta3"/>
    <property type="match status" value="1"/>
</dbReference>